<comment type="function">
    <text evidence="1">Acts as a transcriptional activator that promotes transcription of muscle-specific target genes and plays a role in muscle differentiation. Together with MYOG and MYOD1, co-occupies muscle-specific gene promoter core region during myogenesis. Induces fibroblasts to differentiate into myoblasts. Probable sequence specific DNA-binding protein (By similarity).</text>
</comment>
<comment type="subunit">
    <text>Efficient DNA binding requires dimerization with another bHLH protein.</text>
</comment>
<comment type="subcellular location">
    <subcellularLocation>
        <location>Nucleus</location>
    </subcellularLocation>
</comment>
<protein>
    <recommendedName>
        <fullName>Myogenic factor 5</fullName>
        <shortName>Myf-5</shortName>
    </recommendedName>
</protein>
<sequence>MDMMDGCQFSPSEYFYDGSCIPSPDGEFGDEFEPRVAAFGAHKADLQGSDEDEHVRAPTGHHQAGHCLMWACKACKRKSTTMDRRKAATMRERRRLKKVNQAFDTLKRCTTTNPNQRLPKVEILRNAIRYIESLQELLREQVENYYSLPGQSCSEPTSPTSSCSDGMPECNSPIWSRKSSSFDSVYCPDVPNVYATDKSSLSSLDCLSSIVDRITNSEQPGLPLQDPASLSPVASTDSQPATPGASSSRLIYHVL</sequence>
<accession>P17667</accession>
<accession>A6H7F1</accession>
<accession>Q1T6Y4</accession>
<reference key="1">
    <citation type="journal article" date="1990" name="Nucleic Acids Res.">
        <title>A bovine homolog to the human myogenic determination factor myf-5: sequence conservation and 3' processing of transcripts.</title>
        <authorList>
            <person name="Clark T.G."/>
            <person name="Morris J."/>
            <person name="Akamatsu M."/>
            <person name="McGraw R.A."/>
            <person name="Ivarie R."/>
        </authorList>
    </citation>
    <scope>NUCLEOTIDE SEQUENCE [MRNA]</scope>
    <source>
        <tissue>Fetal muscle</tissue>
    </source>
</reference>
<reference key="2">
    <citation type="journal article" date="1993" name="Gene">
        <title>Isolation, sequence, and characterization of the bovine myogenic factor-encoding gene myf-5.</title>
        <authorList>
            <person name="Barth J.L."/>
            <person name="Worrell R.A."/>
            <person name="Crawford J.M."/>
            <person name="Morris J."/>
            <person name="Ivarie R."/>
        </authorList>
    </citation>
    <scope>NUCLEOTIDE SEQUENCE [GENOMIC DNA]</scope>
</reference>
<reference key="3">
    <citation type="submission" date="2006-04" db="EMBL/GenBank/DDBJ databases">
        <title>Gene expression of MRFs during development of skeletal muscle in Japanese black cattle.</title>
        <authorList>
            <person name="Shibata M."/>
            <person name="Matsumoto K."/>
            <person name="Aikawa K."/>
            <person name="Muramoto T."/>
            <person name="Fujimura S."/>
            <person name="Kadowaki M."/>
        </authorList>
    </citation>
    <scope>NUCLEOTIDE SEQUENCE [MRNA]</scope>
    <source>
        <strain>Japanese black</strain>
        <tissue>Skeletal muscle</tissue>
    </source>
</reference>
<reference key="4">
    <citation type="submission" date="2007-06" db="EMBL/GenBank/DDBJ databases">
        <authorList>
            <consortium name="NIH - Mammalian Gene Collection (MGC) project"/>
        </authorList>
    </citation>
    <scope>NUCLEOTIDE SEQUENCE [LARGE SCALE MRNA]</scope>
    <source>
        <strain>Hereford</strain>
        <tissue>Fetal muscle</tissue>
    </source>
</reference>
<organism>
    <name type="scientific">Bos taurus</name>
    <name type="common">Bovine</name>
    <dbReference type="NCBI Taxonomy" id="9913"/>
    <lineage>
        <taxon>Eukaryota</taxon>
        <taxon>Metazoa</taxon>
        <taxon>Chordata</taxon>
        <taxon>Craniata</taxon>
        <taxon>Vertebrata</taxon>
        <taxon>Euteleostomi</taxon>
        <taxon>Mammalia</taxon>
        <taxon>Eutheria</taxon>
        <taxon>Laurasiatheria</taxon>
        <taxon>Artiodactyla</taxon>
        <taxon>Ruminantia</taxon>
        <taxon>Pecora</taxon>
        <taxon>Bovidae</taxon>
        <taxon>Bovinae</taxon>
        <taxon>Bos</taxon>
    </lineage>
</organism>
<keyword id="KW-0010">Activator</keyword>
<keyword id="KW-0217">Developmental protein</keyword>
<keyword id="KW-0221">Differentiation</keyword>
<keyword id="KW-0238">DNA-binding</keyword>
<keyword id="KW-0517">Myogenesis</keyword>
<keyword id="KW-0539">Nucleus</keyword>
<keyword id="KW-1185">Reference proteome</keyword>
<keyword id="KW-0804">Transcription</keyword>
<keyword id="KW-0805">Transcription regulation</keyword>
<dbReference type="EMBL" id="X52526">
    <property type="protein sequence ID" value="CAA36758.1"/>
    <property type="molecule type" value="mRNA"/>
</dbReference>
<dbReference type="EMBL" id="M95684">
    <property type="protein sequence ID" value="AAA51415.1"/>
    <property type="molecule type" value="Genomic_DNA"/>
</dbReference>
<dbReference type="EMBL" id="AB257294">
    <property type="protein sequence ID" value="BAE93380.1"/>
    <property type="molecule type" value="mRNA"/>
</dbReference>
<dbReference type="EMBL" id="BC146221">
    <property type="protein sequence ID" value="AAI46222.1"/>
    <property type="molecule type" value="mRNA"/>
</dbReference>
<dbReference type="PIR" id="JN0624">
    <property type="entry name" value="JN0624"/>
</dbReference>
<dbReference type="RefSeq" id="NP_776541.1">
    <property type="nucleotide sequence ID" value="NM_174116.1"/>
</dbReference>
<dbReference type="RefSeq" id="XP_015326365.1">
    <property type="nucleotide sequence ID" value="XM_015470879.1"/>
</dbReference>
<dbReference type="SMR" id="P17667"/>
<dbReference type="FunCoup" id="P17667">
    <property type="interactions" value="12"/>
</dbReference>
<dbReference type="STRING" id="9913.ENSBTAP00000038425"/>
<dbReference type="PaxDb" id="9913-ENSBTAP00000038425"/>
<dbReference type="Ensembl" id="ENSBTAT00000038612.2">
    <property type="protein sequence ID" value="ENSBTAP00000038425.1"/>
    <property type="gene ID" value="ENSBTAG00000026972.2"/>
</dbReference>
<dbReference type="GeneID" id="281335"/>
<dbReference type="KEGG" id="bta:281335"/>
<dbReference type="CTD" id="4617"/>
<dbReference type="VEuPathDB" id="HostDB:ENSBTAG00000026972"/>
<dbReference type="VGNC" id="VGNC:31792">
    <property type="gene designation" value="MYF5"/>
</dbReference>
<dbReference type="eggNOG" id="KOG3960">
    <property type="taxonomic scope" value="Eukaryota"/>
</dbReference>
<dbReference type="GeneTree" id="ENSGT00950000182959"/>
<dbReference type="HOGENOM" id="CLU_066887_1_0_1"/>
<dbReference type="InParanoid" id="P17667"/>
<dbReference type="OMA" id="MAECNSP"/>
<dbReference type="OrthoDB" id="10049614at2759"/>
<dbReference type="TreeFam" id="TF316344"/>
<dbReference type="Reactome" id="R-BTA-525793">
    <property type="pathway name" value="Myogenesis"/>
</dbReference>
<dbReference type="Proteomes" id="UP000009136">
    <property type="component" value="Chromosome 5"/>
</dbReference>
<dbReference type="Bgee" id="ENSBTAG00000026972">
    <property type="expression patterns" value="Expressed in oocyte and 26 other cell types or tissues"/>
</dbReference>
<dbReference type="GO" id="GO:0005654">
    <property type="term" value="C:nucleoplasm"/>
    <property type="evidence" value="ECO:0007669"/>
    <property type="project" value="Ensembl"/>
</dbReference>
<dbReference type="GO" id="GO:0001228">
    <property type="term" value="F:DNA-binding transcription activator activity, RNA polymerase II-specific"/>
    <property type="evidence" value="ECO:0007669"/>
    <property type="project" value="Ensembl"/>
</dbReference>
<dbReference type="GO" id="GO:0000981">
    <property type="term" value="F:DNA-binding transcription factor activity, RNA polymerase II-specific"/>
    <property type="evidence" value="ECO:0000318"/>
    <property type="project" value="GO_Central"/>
</dbReference>
<dbReference type="GO" id="GO:0046983">
    <property type="term" value="F:protein dimerization activity"/>
    <property type="evidence" value="ECO:0007669"/>
    <property type="project" value="InterPro"/>
</dbReference>
<dbReference type="GO" id="GO:0000978">
    <property type="term" value="F:RNA polymerase II cis-regulatory region sequence-specific DNA binding"/>
    <property type="evidence" value="ECO:0000318"/>
    <property type="project" value="GO_Central"/>
</dbReference>
<dbReference type="GO" id="GO:0043010">
    <property type="term" value="P:camera-type eye development"/>
    <property type="evidence" value="ECO:0007669"/>
    <property type="project" value="Ensembl"/>
</dbReference>
<dbReference type="GO" id="GO:0001502">
    <property type="term" value="P:cartilage condensation"/>
    <property type="evidence" value="ECO:0007669"/>
    <property type="project" value="Ensembl"/>
</dbReference>
<dbReference type="GO" id="GO:0048704">
    <property type="term" value="P:embryonic skeletal system morphogenesis"/>
    <property type="evidence" value="ECO:0007669"/>
    <property type="project" value="Ensembl"/>
</dbReference>
<dbReference type="GO" id="GO:0030198">
    <property type="term" value="P:extracellular matrix organization"/>
    <property type="evidence" value="ECO:0007669"/>
    <property type="project" value="Ensembl"/>
</dbReference>
<dbReference type="GO" id="GO:0060415">
    <property type="term" value="P:muscle tissue morphogenesis"/>
    <property type="evidence" value="ECO:0007669"/>
    <property type="project" value="Ensembl"/>
</dbReference>
<dbReference type="GO" id="GO:0001503">
    <property type="term" value="P:ossification"/>
    <property type="evidence" value="ECO:0007669"/>
    <property type="project" value="Ensembl"/>
</dbReference>
<dbReference type="GO" id="GO:0045663">
    <property type="term" value="P:positive regulation of myoblast differentiation"/>
    <property type="evidence" value="ECO:0000318"/>
    <property type="project" value="GO_Central"/>
</dbReference>
<dbReference type="GO" id="GO:0048743">
    <property type="term" value="P:positive regulation of skeletal muscle fiber development"/>
    <property type="evidence" value="ECO:0000318"/>
    <property type="project" value="GO_Central"/>
</dbReference>
<dbReference type="GO" id="GO:0001952">
    <property type="term" value="P:regulation of cell-matrix adhesion"/>
    <property type="evidence" value="ECO:0007669"/>
    <property type="project" value="Ensembl"/>
</dbReference>
<dbReference type="GO" id="GO:0006357">
    <property type="term" value="P:regulation of transcription by RNA polymerase II"/>
    <property type="evidence" value="ECO:0000318"/>
    <property type="project" value="GO_Central"/>
</dbReference>
<dbReference type="GO" id="GO:0035914">
    <property type="term" value="P:skeletal muscle cell differentiation"/>
    <property type="evidence" value="ECO:0000318"/>
    <property type="project" value="GO_Central"/>
</dbReference>
<dbReference type="GO" id="GO:0001756">
    <property type="term" value="P:somitogenesis"/>
    <property type="evidence" value="ECO:0007669"/>
    <property type="project" value="Ensembl"/>
</dbReference>
<dbReference type="CDD" id="cd18937">
    <property type="entry name" value="bHLH_TS_Myf5"/>
    <property type="match status" value="1"/>
</dbReference>
<dbReference type="FunFam" id="4.10.280.10:FF:000005">
    <property type="entry name" value="Myogenic factor"/>
    <property type="match status" value="1"/>
</dbReference>
<dbReference type="Gene3D" id="4.10.280.10">
    <property type="entry name" value="Helix-loop-helix DNA-binding domain"/>
    <property type="match status" value="1"/>
</dbReference>
<dbReference type="InterPro" id="IPR011598">
    <property type="entry name" value="bHLH_dom"/>
</dbReference>
<dbReference type="InterPro" id="IPR036638">
    <property type="entry name" value="HLH_DNA-bd_sf"/>
</dbReference>
<dbReference type="InterPro" id="IPR022032">
    <property type="entry name" value="Myf5"/>
</dbReference>
<dbReference type="InterPro" id="IPR002546">
    <property type="entry name" value="MyoD_N"/>
</dbReference>
<dbReference type="InterPro" id="IPR039704">
    <property type="entry name" value="Myogenic_factor"/>
</dbReference>
<dbReference type="PANTHER" id="PTHR11534">
    <property type="entry name" value="MYOGENIC FACTOR"/>
    <property type="match status" value="1"/>
</dbReference>
<dbReference type="PANTHER" id="PTHR11534:SF3">
    <property type="entry name" value="MYOGENIC FACTOR 5"/>
    <property type="match status" value="1"/>
</dbReference>
<dbReference type="Pfam" id="PF01586">
    <property type="entry name" value="Basic"/>
    <property type="match status" value="1"/>
</dbReference>
<dbReference type="Pfam" id="PF00010">
    <property type="entry name" value="HLH"/>
    <property type="match status" value="1"/>
</dbReference>
<dbReference type="Pfam" id="PF12232">
    <property type="entry name" value="Myf5"/>
    <property type="match status" value="1"/>
</dbReference>
<dbReference type="SMART" id="SM00520">
    <property type="entry name" value="BASIC"/>
    <property type="match status" value="1"/>
</dbReference>
<dbReference type="SMART" id="SM00353">
    <property type="entry name" value="HLH"/>
    <property type="match status" value="1"/>
</dbReference>
<dbReference type="SUPFAM" id="SSF47459">
    <property type="entry name" value="HLH, helix-loop-helix DNA-binding domain"/>
    <property type="match status" value="1"/>
</dbReference>
<dbReference type="PROSITE" id="PS50888">
    <property type="entry name" value="BHLH"/>
    <property type="match status" value="1"/>
</dbReference>
<proteinExistence type="evidence at transcript level"/>
<name>MYF5_BOVIN</name>
<feature type="chain" id="PRO_0000127343" description="Myogenic factor 5">
    <location>
        <begin position="1"/>
        <end position="255"/>
    </location>
</feature>
<feature type="domain" description="bHLH" evidence="2">
    <location>
        <begin position="83"/>
        <end position="134"/>
    </location>
</feature>
<feature type="region of interest" description="Disordered" evidence="3">
    <location>
        <begin position="217"/>
        <end position="249"/>
    </location>
</feature>
<feature type="compositionally biased region" description="Polar residues" evidence="3">
    <location>
        <begin position="232"/>
        <end position="249"/>
    </location>
</feature>
<evidence type="ECO:0000250" key="1"/>
<evidence type="ECO:0000255" key="2">
    <source>
        <dbReference type="PROSITE-ProRule" id="PRU00981"/>
    </source>
</evidence>
<evidence type="ECO:0000256" key="3">
    <source>
        <dbReference type="SAM" id="MobiDB-lite"/>
    </source>
</evidence>
<gene>
    <name type="primary">MYF5</name>
</gene>